<sequence>MKLRCPAAYGTSHVDDANMKKLRSRITTDGLDRAPHRAFMRAMGLDDAAIAKPMVGIVSMKGEQTPCNMTHDFQVAAAKTGIEEAGGTPREFSTVSVSDGISMNHEGMKFSLFSRELIADSIEAVVHGLAYDALIGYGGCDKTLPGVMMGMVRCNVPSIFIYGGSSLPGRVDGRTLTVLDSYEAVGSFMTGEIDSATLERIERACLPTIGACAGQFTANTMGMVSEAMGLTIPNVSMVPGVYAERAQISRRAGRLIMEMLERGGPLPRDIVTRKSLENGAAIVAATGGSTNAALHLPAIANEAGIAFTIDDVGEVFARTPLIGNLRPGGKYTAKDVHDIGGAAVVIQELIRTGHIDGNCITITGRTLAEEYGAANAPDGEVVYAASAPIMPDGGVAVLKGNLCPDGAVIKVAGLKSQFFEGVARVFEDEEACVAAVRDRSYKAGEVLVIRNEGPVGGPGMREMLGVTALIYGQGMGEKVALITDGRFSGATRGMCIGYVSPEAFVGGPLALVRDGDKIRIDATNRRMDMLVDEPELAARRRDWKPRPPRHRAGALAKYARLVGQAPGGAVTHEGPAEWPWFE</sequence>
<gene>
    <name evidence="1" type="primary">ilvD3</name>
    <name type="ordered locus">bll6092</name>
</gene>
<dbReference type="EC" id="4.2.1.9" evidence="1"/>
<dbReference type="EMBL" id="BA000040">
    <property type="protein sequence ID" value="BAC51357.1"/>
    <property type="molecule type" value="Genomic_DNA"/>
</dbReference>
<dbReference type="RefSeq" id="NP_772732.2">
    <property type="nucleotide sequence ID" value="NC_004463.1"/>
</dbReference>
<dbReference type="SMR" id="Q89HA2"/>
<dbReference type="STRING" id="224911.AAV28_27990"/>
<dbReference type="EnsemblBacteria" id="BAC51357">
    <property type="protein sequence ID" value="BAC51357"/>
    <property type="gene ID" value="BAC51357"/>
</dbReference>
<dbReference type="KEGG" id="bja:bll6092"/>
<dbReference type="PATRIC" id="fig|224911.5.peg.6218"/>
<dbReference type="eggNOG" id="COG0129">
    <property type="taxonomic scope" value="Bacteria"/>
</dbReference>
<dbReference type="HOGENOM" id="CLU_014271_4_2_5"/>
<dbReference type="InParanoid" id="Q89HA2"/>
<dbReference type="OrthoDB" id="7793094at2"/>
<dbReference type="UniPathway" id="UPA00047">
    <property type="reaction ID" value="UER00057"/>
</dbReference>
<dbReference type="UniPathway" id="UPA00049">
    <property type="reaction ID" value="UER00061"/>
</dbReference>
<dbReference type="Proteomes" id="UP000002526">
    <property type="component" value="Chromosome"/>
</dbReference>
<dbReference type="GO" id="GO:0051537">
    <property type="term" value="F:2 iron, 2 sulfur cluster binding"/>
    <property type="evidence" value="ECO:0007669"/>
    <property type="project" value="UniProtKB-UniRule"/>
</dbReference>
<dbReference type="GO" id="GO:0004160">
    <property type="term" value="F:dihydroxy-acid dehydratase activity"/>
    <property type="evidence" value="ECO:0000318"/>
    <property type="project" value="GO_Central"/>
</dbReference>
<dbReference type="GO" id="GO:0000287">
    <property type="term" value="F:magnesium ion binding"/>
    <property type="evidence" value="ECO:0007669"/>
    <property type="project" value="UniProtKB-UniRule"/>
</dbReference>
<dbReference type="GO" id="GO:0009082">
    <property type="term" value="P:branched-chain amino acid biosynthetic process"/>
    <property type="evidence" value="ECO:0000318"/>
    <property type="project" value="GO_Central"/>
</dbReference>
<dbReference type="GO" id="GO:0009097">
    <property type="term" value="P:isoleucine biosynthetic process"/>
    <property type="evidence" value="ECO:0007669"/>
    <property type="project" value="UniProtKB-UniRule"/>
</dbReference>
<dbReference type="GO" id="GO:0009099">
    <property type="term" value="P:L-valine biosynthetic process"/>
    <property type="evidence" value="ECO:0007669"/>
    <property type="project" value="UniProtKB-UniRule"/>
</dbReference>
<dbReference type="FunFam" id="3.50.30.80:FF:000001">
    <property type="entry name" value="Dihydroxy-acid dehydratase"/>
    <property type="match status" value="1"/>
</dbReference>
<dbReference type="Gene3D" id="3.50.30.80">
    <property type="entry name" value="IlvD/EDD C-terminal domain-like"/>
    <property type="match status" value="1"/>
</dbReference>
<dbReference type="HAMAP" id="MF_00012">
    <property type="entry name" value="IlvD"/>
    <property type="match status" value="1"/>
</dbReference>
<dbReference type="InterPro" id="IPR050165">
    <property type="entry name" value="DHAD_IlvD/Edd"/>
</dbReference>
<dbReference type="InterPro" id="IPR042096">
    <property type="entry name" value="Dihydro-acid_dehy_C"/>
</dbReference>
<dbReference type="InterPro" id="IPR004404">
    <property type="entry name" value="DihydroxyA_deHydtase"/>
</dbReference>
<dbReference type="InterPro" id="IPR020558">
    <property type="entry name" value="DiOHA_6PGluconate_deHydtase_CS"/>
</dbReference>
<dbReference type="InterPro" id="IPR056740">
    <property type="entry name" value="ILV_EDD_C"/>
</dbReference>
<dbReference type="InterPro" id="IPR000581">
    <property type="entry name" value="ILV_EDD_N"/>
</dbReference>
<dbReference type="InterPro" id="IPR037237">
    <property type="entry name" value="IlvD/EDD_N"/>
</dbReference>
<dbReference type="NCBIfam" id="TIGR00110">
    <property type="entry name" value="ilvD"/>
    <property type="match status" value="1"/>
</dbReference>
<dbReference type="NCBIfam" id="NF002068">
    <property type="entry name" value="PRK00911.1"/>
    <property type="match status" value="1"/>
</dbReference>
<dbReference type="PANTHER" id="PTHR21000">
    <property type="entry name" value="DIHYDROXY-ACID DEHYDRATASE DAD"/>
    <property type="match status" value="1"/>
</dbReference>
<dbReference type="PANTHER" id="PTHR21000:SF5">
    <property type="entry name" value="DIHYDROXY-ACID DEHYDRATASE, MITOCHONDRIAL"/>
    <property type="match status" value="1"/>
</dbReference>
<dbReference type="Pfam" id="PF24877">
    <property type="entry name" value="ILV_EDD_C"/>
    <property type="match status" value="1"/>
</dbReference>
<dbReference type="Pfam" id="PF00920">
    <property type="entry name" value="ILVD_EDD_N"/>
    <property type="match status" value="1"/>
</dbReference>
<dbReference type="SUPFAM" id="SSF143975">
    <property type="entry name" value="IlvD/EDD N-terminal domain-like"/>
    <property type="match status" value="1"/>
</dbReference>
<dbReference type="SUPFAM" id="SSF52016">
    <property type="entry name" value="LeuD/IlvD-like"/>
    <property type="match status" value="1"/>
</dbReference>
<dbReference type="PROSITE" id="PS00886">
    <property type="entry name" value="ILVD_EDD_1"/>
    <property type="match status" value="1"/>
</dbReference>
<dbReference type="PROSITE" id="PS00887">
    <property type="entry name" value="ILVD_EDD_2"/>
    <property type="match status" value="1"/>
</dbReference>
<feature type="chain" id="PRO_0000103443" description="Dihydroxy-acid dehydratase 3">
    <location>
        <begin position="1"/>
        <end position="582"/>
    </location>
</feature>
<feature type="active site" description="Proton acceptor" evidence="1">
    <location>
        <position position="488"/>
    </location>
</feature>
<feature type="binding site" evidence="1">
    <location>
        <position position="67"/>
    </location>
    <ligand>
        <name>[2Fe-2S] cluster</name>
        <dbReference type="ChEBI" id="CHEBI:190135"/>
    </ligand>
</feature>
<feature type="binding site" evidence="1">
    <location>
        <position position="99"/>
    </location>
    <ligand>
        <name>Mg(2+)</name>
        <dbReference type="ChEBI" id="CHEBI:18420"/>
    </ligand>
</feature>
<feature type="binding site" evidence="1">
    <location>
        <position position="140"/>
    </location>
    <ligand>
        <name>[2Fe-2S] cluster</name>
        <dbReference type="ChEBI" id="CHEBI:190135"/>
    </ligand>
</feature>
<feature type="binding site" evidence="1">
    <location>
        <position position="141"/>
    </location>
    <ligand>
        <name>Mg(2+)</name>
        <dbReference type="ChEBI" id="CHEBI:18420"/>
    </ligand>
</feature>
<feature type="binding site" description="via carbamate group" evidence="1">
    <location>
        <position position="142"/>
    </location>
    <ligand>
        <name>Mg(2+)</name>
        <dbReference type="ChEBI" id="CHEBI:18420"/>
    </ligand>
</feature>
<feature type="binding site" evidence="1">
    <location>
        <position position="212"/>
    </location>
    <ligand>
        <name>[2Fe-2S] cluster</name>
        <dbReference type="ChEBI" id="CHEBI:190135"/>
    </ligand>
</feature>
<feature type="binding site" evidence="1">
    <location>
        <position position="462"/>
    </location>
    <ligand>
        <name>Mg(2+)</name>
        <dbReference type="ChEBI" id="CHEBI:18420"/>
    </ligand>
</feature>
<feature type="modified residue" description="N6-carboxylysine" evidence="1">
    <location>
        <position position="142"/>
    </location>
</feature>
<keyword id="KW-0001">2Fe-2S</keyword>
<keyword id="KW-0028">Amino-acid biosynthesis</keyword>
<keyword id="KW-0100">Branched-chain amino acid biosynthesis</keyword>
<keyword id="KW-0408">Iron</keyword>
<keyword id="KW-0411">Iron-sulfur</keyword>
<keyword id="KW-0456">Lyase</keyword>
<keyword id="KW-0460">Magnesium</keyword>
<keyword id="KW-0479">Metal-binding</keyword>
<keyword id="KW-1185">Reference proteome</keyword>
<protein>
    <recommendedName>
        <fullName evidence="1">Dihydroxy-acid dehydratase 3</fullName>
        <shortName evidence="1">DAD 3</shortName>
        <ecNumber evidence="1">4.2.1.9</ecNumber>
    </recommendedName>
</protein>
<evidence type="ECO:0000255" key="1">
    <source>
        <dbReference type="HAMAP-Rule" id="MF_00012"/>
    </source>
</evidence>
<proteinExistence type="inferred from homology"/>
<organism>
    <name type="scientific">Bradyrhizobium diazoefficiens (strain JCM 10833 / BCRC 13528 / IAM 13628 / NBRC 14792 / USDA 110)</name>
    <dbReference type="NCBI Taxonomy" id="224911"/>
    <lineage>
        <taxon>Bacteria</taxon>
        <taxon>Pseudomonadati</taxon>
        <taxon>Pseudomonadota</taxon>
        <taxon>Alphaproteobacteria</taxon>
        <taxon>Hyphomicrobiales</taxon>
        <taxon>Nitrobacteraceae</taxon>
        <taxon>Bradyrhizobium</taxon>
    </lineage>
</organism>
<accession>Q89HA2</accession>
<reference key="1">
    <citation type="journal article" date="2002" name="DNA Res.">
        <title>Complete genomic sequence of nitrogen-fixing symbiotic bacterium Bradyrhizobium japonicum USDA110.</title>
        <authorList>
            <person name="Kaneko T."/>
            <person name="Nakamura Y."/>
            <person name="Sato S."/>
            <person name="Minamisawa K."/>
            <person name="Uchiumi T."/>
            <person name="Sasamoto S."/>
            <person name="Watanabe A."/>
            <person name="Idesawa K."/>
            <person name="Iriguchi M."/>
            <person name="Kawashima K."/>
            <person name="Kohara M."/>
            <person name="Matsumoto M."/>
            <person name="Shimpo S."/>
            <person name="Tsuruoka H."/>
            <person name="Wada T."/>
            <person name="Yamada M."/>
            <person name="Tabata S."/>
        </authorList>
    </citation>
    <scope>NUCLEOTIDE SEQUENCE [LARGE SCALE GENOMIC DNA]</scope>
    <source>
        <strain>JCM 10833 / BCRC 13528 / IAM 13628 / NBRC 14792 / USDA 110</strain>
    </source>
</reference>
<comment type="function">
    <text evidence="1">Functions in the biosynthesis of branched-chain amino acids. Catalyzes the dehydration of (2R,3R)-2,3-dihydroxy-3-methylpentanoate (2,3-dihydroxy-3-methylvalerate) into 2-oxo-3-methylpentanoate (2-oxo-3-methylvalerate) and of (2R)-2,3-dihydroxy-3-methylbutanoate (2,3-dihydroxyisovalerate) into 2-oxo-3-methylbutanoate (2-oxoisovalerate), the penultimate precursor to L-isoleucine and L-valine, respectively.</text>
</comment>
<comment type="catalytic activity">
    <reaction evidence="1">
        <text>(2R)-2,3-dihydroxy-3-methylbutanoate = 3-methyl-2-oxobutanoate + H2O</text>
        <dbReference type="Rhea" id="RHEA:24809"/>
        <dbReference type="ChEBI" id="CHEBI:11851"/>
        <dbReference type="ChEBI" id="CHEBI:15377"/>
        <dbReference type="ChEBI" id="CHEBI:49072"/>
        <dbReference type="EC" id="4.2.1.9"/>
    </reaction>
    <physiologicalReaction direction="left-to-right" evidence="1">
        <dbReference type="Rhea" id="RHEA:24810"/>
    </physiologicalReaction>
</comment>
<comment type="catalytic activity">
    <reaction evidence="1">
        <text>(2R,3R)-2,3-dihydroxy-3-methylpentanoate = (S)-3-methyl-2-oxopentanoate + H2O</text>
        <dbReference type="Rhea" id="RHEA:27694"/>
        <dbReference type="ChEBI" id="CHEBI:15377"/>
        <dbReference type="ChEBI" id="CHEBI:35146"/>
        <dbReference type="ChEBI" id="CHEBI:49258"/>
        <dbReference type="EC" id="4.2.1.9"/>
    </reaction>
    <physiologicalReaction direction="left-to-right" evidence="1">
        <dbReference type="Rhea" id="RHEA:27695"/>
    </physiologicalReaction>
</comment>
<comment type="cofactor">
    <cofactor evidence="1">
        <name>[2Fe-2S] cluster</name>
        <dbReference type="ChEBI" id="CHEBI:190135"/>
    </cofactor>
    <text evidence="1">Binds 1 [2Fe-2S] cluster per subunit. This cluster acts as a Lewis acid cofactor.</text>
</comment>
<comment type="cofactor">
    <cofactor evidence="1">
        <name>Mg(2+)</name>
        <dbReference type="ChEBI" id="CHEBI:18420"/>
    </cofactor>
</comment>
<comment type="pathway">
    <text evidence="1">Amino-acid biosynthesis; L-isoleucine biosynthesis; L-isoleucine from 2-oxobutanoate: step 3/4.</text>
</comment>
<comment type="pathway">
    <text evidence="1">Amino-acid biosynthesis; L-valine biosynthesis; L-valine from pyruvate: step 3/4.</text>
</comment>
<comment type="subunit">
    <text evidence="1">Homodimer.</text>
</comment>
<comment type="similarity">
    <text evidence="1">Belongs to the IlvD/Edd family.</text>
</comment>
<name>ILVD3_BRADU</name>